<organism>
    <name type="scientific">Komagataella phaffii (strain GS115 / ATCC 20864)</name>
    <name type="common">Yeast</name>
    <name type="synonym">Pichia pastoris</name>
    <dbReference type="NCBI Taxonomy" id="644223"/>
    <lineage>
        <taxon>Eukaryota</taxon>
        <taxon>Fungi</taxon>
        <taxon>Dikarya</taxon>
        <taxon>Ascomycota</taxon>
        <taxon>Saccharomycotina</taxon>
        <taxon>Pichiomycetes</taxon>
        <taxon>Pichiales</taxon>
        <taxon>Pichiaceae</taxon>
        <taxon>Komagataella</taxon>
    </lineage>
</organism>
<comment type="subunit">
    <text evidence="1">Component of the small ribosomal subunit. Mature ribosomes consist of a small (40S) and a large (60S) subunit. The 40S subunit contains about 33 different proteins and 1 molecule of RNA (18S). The 60S subunit contains about 49 different proteins and 3 molecules of RNA (25S, 5.8S and 5S).</text>
</comment>
<comment type="subcellular location">
    <subcellularLocation>
        <location evidence="1">Cytoplasm</location>
    </subcellularLocation>
</comment>
<comment type="similarity">
    <text evidence="1">Belongs to the eukaryotic ribosomal protein eS1 family.</text>
</comment>
<evidence type="ECO:0000255" key="1">
    <source>
        <dbReference type="HAMAP-Rule" id="MF_03122"/>
    </source>
</evidence>
<evidence type="ECO:0000305" key="2"/>
<reference key="1">
    <citation type="journal article" date="2009" name="Nat. Biotechnol.">
        <title>Genome sequence of the recombinant protein production host Pichia pastoris.</title>
        <authorList>
            <person name="De Schutter K."/>
            <person name="Lin Y.-C."/>
            <person name="Tiels P."/>
            <person name="Van Hecke A."/>
            <person name="Glinka S."/>
            <person name="Weber-Lehmann J."/>
            <person name="Rouze P."/>
            <person name="Van de Peer Y."/>
            <person name="Callewaert N."/>
        </authorList>
    </citation>
    <scope>NUCLEOTIDE SEQUENCE [LARGE SCALE GENOMIC DNA]</scope>
    <source>
        <strain>GS115 / ATCC 20864</strain>
    </source>
</reference>
<protein>
    <recommendedName>
        <fullName evidence="1">Small ribosomal subunit protein eS1</fullName>
    </recommendedName>
    <alternativeName>
        <fullName evidence="2">40S ribosomal protein S1</fullName>
    </alternativeName>
</protein>
<accession>C4R853</accession>
<name>RS3A_KOMPG</name>
<gene>
    <name evidence="1" type="primary">RPS1</name>
    <name type="ordered locus">PAS_chr4_0524</name>
</gene>
<feature type="initiator methionine" description="Removed" evidence="1">
    <location>
        <position position="1"/>
    </location>
</feature>
<feature type="chain" id="PRO_0000389398" description="Small ribosomal subunit protein eS1">
    <location>
        <begin position="2"/>
        <end position="256"/>
    </location>
</feature>
<feature type="modified residue" description="N-acetylalanine; partial" evidence="1">
    <location>
        <position position="2"/>
    </location>
</feature>
<proteinExistence type="inferred from homology"/>
<sequence length="256" mass="28878">MAVGKNKRLSKGKKGLKKKVVDPFQRKEWYDIKAPTTFENRNVGKTLINKSTGLKNAVDGLKGRVVEVSLADLQGSEDHSFKKIKLRVDEVQGKNLLTNFHGFDFTSDKVRSLVRKWQSLVEANVTVKTADDYVLRIFCIAFTRRHQNQIKKTTYAQSSQLSAIRKKMVEIMQREVSNVTLAQLTSKLIPEVIGREIEKAAEGIYPLQNVHIRKVKVLKQAKFDLGALLALHGESVTEENGKKVGSEFQDVVLETV</sequence>
<dbReference type="EMBL" id="FN392322">
    <property type="protein sequence ID" value="CAY71778.1"/>
    <property type="molecule type" value="Genomic_DNA"/>
</dbReference>
<dbReference type="RefSeq" id="XP_002493957.1">
    <property type="nucleotide sequence ID" value="XM_002493912.1"/>
</dbReference>
<dbReference type="SMR" id="C4R853"/>
<dbReference type="FunCoup" id="C4R853">
    <property type="interactions" value="1371"/>
</dbReference>
<dbReference type="STRING" id="644223.C4R853"/>
<dbReference type="EnsemblFungi" id="CAY71778">
    <property type="protein sequence ID" value="CAY71778"/>
    <property type="gene ID" value="PAS_chr4_0524"/>
</dbReference>
<dbReference type="GeneID" id="8201466"/>
<dbReference type="KEGG" id="ppa:PAS_chr4_0524"/>
<dbReference type="eggNOG" id="KOG1628">
    <property type="taxonomic scope" value="Eukaryota"/>
</dbReference>
<dbReference type="HOGENOM" id="CLU_062507_0_0_1"/>
<dbReference type="InParanoid" id="C4R853"/>
<dbReference type="OMA" id="TRFKGHE"/>
<dbReference type="OrthoDB" id="9834376at2759"/>
<dbReference type="Proteomes" id="UP000000314">
    <property type="component" value="Chromosome 4"/>
</dbReference>
<dbReference type="GO" id="GO:0022627">
    <property type="term" value="C:cytosolic small ribosomal subunit"/>
    <property type="evidence" value="ECO:0007669"/>
    <property type="project" value="UniProtKB-UniRule"/>
</dbReference>
<dbReference type="GO" id="GO:0003735">
    <property type="term" value="F:structural constituent of ribosome"/>
    <property type="evidence" value="ECO:0007669"/>
    <property type="project" value="UniProtKB-UniRule"/>
</dbReference>
<dbReference type="GO" id="GO:0006412">
    <property type="term" value="P:translation"/>
    <property type="evidence" value="ECO:0007669"/>
    <property type="project" value="UniProtKB-UniRule"/>
</dbReference>
<dbReference type="HAMAP" id="MF_03122">
    <property type="entry name" value="Ribosomal_eS1_euk"/>
    <property type="match status" value="1"/>
</dbReference>
<dbReference type="InterPro" id="IPR001593">
    <property type="entry name" value="Ribosomal_eS1"/>
</dbReference>
<dbReference type="InterPro" id="IPR018281">
    <property type="entry name" value="Ribosomal_eS1_CS"/>
</dbReference>
<dbReference type="InterPro" id="IPR027500">
    <property type="entry name" value="Ribosomal_eS1_euk"/>
</dbReference>
<dbReference type="PANTHER" id="PTHR11830">
    <property type="entry name" value="40S RIBOSOMAL PROTEIN S3A"/>
    <property type="match status" value="1"/>
</dbReference>
<dbReference type="Pfam" id="PF01015">
    <property type="entry name" value="Ribosomal_S3Ae"/>
    <property type="match status" value="1"/>
</dbReference>
<dbReference type="SMART" id="SM01397">
    <property type="entry name" value="Ribosomal_S3Ae"/>
    <property type="match status" value="1"/>
</dbReference>
<dbReference type="PROSITE" id="PS01191">
    <property type="entry name" value="RIBOSOMAL_S3AE"/>
    <property type="match status" value="1"/>
</dbReference>
<keyword id="KW-0007">Acetylation</keyword>
<keyword id="KW-0963">Cytoplasm</keyword>
<keyword id="KW-1185">Reference proteome</keyword>
<keyword id="KW-0687">Ribonucleoprotein</keyword>
<keyword id="KW-0689">Ribosomal protein</keyword>